<gene>
    <name evidence="1" type="primary">pheT</name>
    <name type="ordered locus">Mfl398</name>
</gene>
<comment type="catalytic activity">
    <reaction evidence="1">
        <text>tRNA(Phe) + L-phenylalanine + ATP = L-phenylalanyl-tRNA(Phe) + AMP + diphosphate + H(+)</text>
        <dbReference type="Rhea" id="RHEA:19413"/>
        <dbReference type="Rhea" id="RHEA-COMP:9668"/>
        <dbReference type="Rhea" id="RHEA-COMP:9699"/>
        <dbReference type="ChEBI" id="CHEBI:15378"/>
        <dbReference type="ChEBI" id="CHEBI:30616"/>
        <dbReference type="ChEBI" id="CHEBI:33019"/>
        <dbReference type="ChEBI" id="CHEBI:58095"/>
        <dbReference type="ChEBI" id="CHEBI:78442"/>
        <dbReference type="ChEBI" id="CHEBI:78531"/>
        <dbReference type="ChEBI" id="CHEBI:456215"/>
        <dbReference type="EC" id="6.1.1.20"/>
    </reaction>
</comment>
<comment type="cofactor">
    <cofactor evidence="1">
        <name>Mg(2+)</name>
        <dbReference type="ChEBI" id="CHEBI:18420"/>
    </cofactor>
    <text evidence="1">Binds 2 magnesium ions per tetramer.</text>
</comment>
<comment type="subunit">
    <text evidence="1">Tetramer of two alpha and two beta subunits.</text>
</comment>
<comment type="subcellular location">
    <subcellularLocation>
        <location evidence="1">Cytoplasm</location>
    </subcellularLocation>
</comment>
<comment type="similarity">
    <text evidence="1">Belongs to the phenylalanyl-tRNA synthetase beta subunit family. Type 1 subfamily.</text>
</comment>
<proteinExistence type="inferred from homology"/>
<keyword id="KW-0030">Aminoacyl-tRNA synthetase</keyword>
<keyword id="KW-0067">ATP-binding</keyword>
<keyword id="KW-0963">Cytoplasm</keyword>
<keyword id="KW-0436">Ligase</keyword>
<keyword id="KW-0460">Magnesium</keyword>
<keyword id="KW-0479">Metal-binding</keyword>
<keyword id="KW-0547">Nucleotide-binding</keyword>
<keyword id="KW-0648">Protein biosynthesis</keyword>
<keyword id="KW-1185">Reference proteome</keyword>
<keyword id="KW-0694">RNA-binding</keyword>
<keyword id="KW-0820">tRNA-binding</keyword>
<reference key="1">
    <citation type="submission" date="2004-06" db="EMBL/GenBank/DDBJ databases">
        <authorList>
            <person name="Birren B.W."/>
            <person name="Stange-Thomann N."/>
            <person name="Hafez N."/>
            <person name="DeCaprio D."/>
            <person name="Fisher S."/>
            <person name="Butler J."/>
            <person name="Elkins T."/>
            <person name="Kodira C.D."/>
            <person name="Major J."/>
            <person name="Wang S."/>
            <person name="Nicol R."/>
            <person name="Nusbaum C."/>
        </authorList>
    </citation>
    <scope>NUCLEOTIDE SEQUENCE [LARGE SCALE GENOMIC DNA]</scope>
    <source>
        <strain>ATCC 33453 / NBRC 100688 / NCTC 11704 / L1</strain>
    </source>
</reference>
<name>SYFB_MESFL</name>
<accession>Q6F166</accession>
<feature type="chain" id="PRO_0000232804" description="Phenylalanine--tRNA ligase beta subunit">
    <location>
        <begin position="1"/>
        <end position="793"/>
    </location>
</feature>
<feature type="domain" description="tRNA-binding" evidence="1">
    <location>
        <begin position="40"/>
        <end position="159"/>
    </location>
</feature>
<feature type="domain" description="B5" evidence="1">
    <location>
        <begin position="401"/>
        <end position="476"/>
    </location>
</feature>
<feature type="domain" description="FDX-ACB" evidence="1">
    <location>
        <begin position="701"/>
        <end position="793"/>
    </location>
</feature>
<feature type="binding site" evidence="1">
    <location>
        <position position="454"/>
    </location>
    <ligand>
        <name>Mg(2+)</name>
        <dbReference type="ChEBI" id="CHEBI:18420"/>
        <note>shared with alpha subunit</note>
    </ligand>
</feature>
<feature type="binding site" evidence="1">
    <location>
        <position position="460"/>
    </location>
    <ligand>
        <name>Mg(2+)</name>
        <dbReference type="ChEBI" id="CHEBI:18420"/>
        <note>shared with alpha subunit</note>
    </ligand>
</feature>
<feature type="binding site" evidence="1">
    <location>
        <position position="463"/>
    </location>
    <ligand>
        <name>Mg(2+)</name>
        <dbReference type="ChEBI" id="CHEBI:18420"/>
        <note>shared with alpha subunit</note>
    </ligand>
</feature>
<feature type="binding site" evidence="1">
    <location>
        <position position="464"/>
    </location>
    <ligand>
        <name>Mg(2+)</name>
        <dbReference type="ChEBI" id="CHEBI:18420"/>
        <note>shared with alpha subunit</note>
    </ligand>
</feature>
<organism>
    <name type="scientific">Mesoplasma florum (strain ATCC 33453 / NBRC 100688 / NCTC 11704 / L1)</name>
    <name type="common">Acholeplasma florum</name>
    <dbReference type="NCBI Taxonomy" id="265311"/>
    <lineage>
        <taxon>Bacteria</taxon>
        <taxon>Bacillati</taxon>
        <taxon>Mycoplasmatota</taxon>
        <taxon>Mollicutes</taxon>
        <taxon>Entomoplasmatales</taxon>
        <taxon>Entomoplasmataceae</taxon>
        <taxon>Mesoplasma</taxon>
    </lineage>
</organism>
<dbReference type="EC" id="6.1.1.20" evidence="1"/>
<dbReference type="EMBL" id="AE017263">
    <property type="protein sequence ID" value="AAT75757.1"/>
    <property type="molecule type" value="Genomic_DNA"/>
</dbReference>
<dbReference type="RefSeq" id="WP_011183297.1">
    <property type="nucleotide sequence ID" value="NC_006055.1"/>
</dbReference>
<dbReference type="RefSeq" id="YP_053641.1">
    <property type="nucleotide sequence ID" value="NC_006055.1"/>
</dbReference>
<dbReference type="SMR" id="Q6F166"/>
<dbReference type="STRING" id="265311.Mfl398"/>
<dbReference type="PaxDb" id="265311-Mfl398"/>
<dbReference type="EnsemblBacteria" id="AAT75757">
    <property type="protein sequence ID" value="AAT75757"/>
    <property type="gene ID" value="Mfl398"/>
</dbReference>
<dbReference type="GeneID" id="2898102"/>
<dbReference type="KEGG" id="mfl:Mfl398"/>
<dbReference type="PATRIC" id="fig|265311.5.peg.398"/>
<dbReference type="eggNOG" id="COG0072">
    <property type="taxonomic scope" value="Bacteria"/>
</dbReference>
<dbReference type="eggNOG" id="COG0073">
    <property type="taxonomic scope" value="Bacteria"/>
</dbReference>
<dbReference type="HOGENOM" id="CLU_016891_2_0_14"/>
<dbReference type="OrthoDB" id="9805455at2"/>
<dbReference type="Proteomes" id="UP000006647">
    <property type="component" value="Chromosome"/>
</dbReference>
<dbReference type="GO" id="GO:0009328">
    <property type="term" value="C:phenylalanine-tRNA ligase complex"/>
    <property type="evidence" value="ECO:0007669"/>
    <property type="project" value="TreeGrafter"/>
</dbReference>
<dbReference type="GO" id="GO:0005524">
    <property type="term" value="F:ATP binding"/>
    <property type="evidence" value="ECO:0007669"/>
    <property type="project" value="UniProtKB-UniRule"/>
</dbReference>
<dbReference type="GO" id="GO:0000287">
    <property type="term" value="F:magnesium ion binding"/>
    <property type="evidence" value="ECO:0007669"/>
    <property type="project" value="UniProtKB-UniRule"/>
</dbReference>
<dbReference type="GO" id="GO:0004826">
    <property type="term" value="F:phenylalanine-tRNA ligase activity"/>
    <property type="evidence" value="ECO:0007669"/>
    <property type="project" value="UniProtKB-UniRule"/>
</dbReference>
<dbReference type="GO" id="GO:0000049">
    <property type="term" value="F:tRNA binding"/>
    <property type="evidence" value="ECO:0007669"/>
    <property type="project" value="UniProtKB-KW"/>
</dbReference>
<dbReference type="GO" id="GO:0006432">
    <property type="term" value="P:phenylalanyl-tRNA aminoacylation"/>
    <property type="evidence" value="ECO:0007669"/>
    <property type="project" value="UniProtKB-UniRule"/>
</dbReference>
<dbReference type="CDD" id="cd02796">
    <property type="entry name" value="tRNA_bind_bactPheRS"/>
    <property type="match status" value="1"/>
</dbReference>
<dbReference type="Gene3D" id="3.30.56.10">
    <property type="match status" value="2"/>
</dbReference>
<dbReference type="Gene3D" id="3.30.930.10">
    <property type="entry name" value="Bira Bifunctional Protein, Domain 2"/>
    <property type="match status" value="1"/>
</dbReference>
<dbReference type="Gene3D" id="3.30.70.380">
    <property type="entry name" value="Ferrodoxin-fold anticodon-binding domain"/>
    <property type="match status" value="1"/>
</dbReference>
<dbReference type="Gene3D" id="2.40.50.140">
    <property type="entry name" value="Nucleic acid-binding proteins"/>
    <property type="match status" value="1"/>
</dbReference>
<dbReference type="Gene3D" id="3.50.40.10">
    <property type="entry name" value="Phenylalanyl-trna Synthetase, Chain B, domain 3"/>
    <property type="match status" value="1"/>
</dbReference>
<dbReference type="HAMAP" id="MF_00283">
    <property type="entry name" value="Phe_tRNA_synth_beta1"/>
    <property type="match status" value="1"/>
</dbReference>
<dbReference type="InterPro" id="IPR045864">
    <property type="entry name" value="aa-tRNA-synth_II/BPL/LPL"/>
</dbReference>
<dbReference type="InterPro" id="IPR005146">
    <property type="entry name" value="B3/B4_tRNA-bd"/>
</dbReference>
<dbReference type="InterPro" id="IPR009061">
    <property type="entry name" value="DNA-bd_dom_put_sf"/>
</dbReference>
<dbReference type="InterPro" id="IPR005121">
    <property type="entry name" value="Fdx_antiC-bd"/>
</dbReference>
<dbReference type="InterPro" id="IPR036690">
    <property type="entry name" value="Fdx_antiC-bd_sf"/>
</dbReference>
<dbReference type="InterPro" id="IPR012340">
    <property type="entry name" value="NA-bd_OB-fold"/>
</dbReference>
<dbReference type="InterPro" id="IPR045060">
    <property type="entry name" value="Phe-tRNA-ligase_IIc_bsu"/>
</dbReference>
<dbReference type="InterPro" id="IPR004532">
    <property type="entry name" value="Phe-tRNA-ligase_IIc_bsu_bact"/>
</dbReference>
<dbReference type="InterPro" id="IPR020825">
    <property type="entry name" value="Phe-tRNA_synthase-like_B3/B4"/>
</dbReference>
<dbReference type="InterPro" id="IPR041616">
    <property type="entry name" value="PheRS_beta_core"/>
</dbReference>
<dbReference type="InterPro" id="IPR002547">
    <property type="entry name" value="tRNA-bd_dom"/>
</dbReference>
<dbReference type="InterPro" id="IPR033714">
    <property type="entry name" value="tRNA_bind_bactPheRS"/>
</dbReference>
<dbReference type="InterPro" id="IPR005147">
    <property type="entry name" value="tRNA_synthase_B5-dom"/>
</dbReference>
<dbReference type="NCBIfam" id="TIGR00472">
    <property type="entry name" value="pheT_bact"/>
    <property type="match status" value="1"/>
</dbReference>
<dbReference type="PANTHER" id="PTHR10947:SF0">
    <property type="entry name" value="PHENYLALANINE--TRNA LIGASE BETA SUBUNIT"/>
    <property type="match status" value="1"/>
</dbReference>
<dbReference type="PANTHER" id="PTHR10947">
    <property type="entry name" value="PHENYLALANYL-TRNA SYNTHETASE BETA CHAIN AND LEUCINE-RICH REPEAT-CONTAINING PROTEIN 47"/>
    <property type="match status" value="1"/>
</dbReference>
<dbReference type="Pfam" id="PF03483">
    <property type="entry name" value="B3_4"/>
    <property type="match status" value="1"/>
</dbReference>
<dbReference type="Pfam" id="PF03484">
    <property type="entry name" value="B5"/>
    <property type="match status" value="1"/>
</dbReference>
<dbReference type="Pfam" id="PF03147">
    <property type="entry name" value="FDX-ACB"/>
    <property type="match status" value="1"/>
</dbReference>
<dbReference type="Pfam" id="PF17759">
    <property type="entry name" value="tRNA_synthFbeta"/>
    <property type="match status" value="1"/>
</dbReference>
<dbReference type="SMART" id="SM00873">
    <property type="entry name" value="B3_4"/>
    <property type="match status" value="1"/>
</dbReference>
<dbReference type="SMART" id="SM00874">
    <property type="entry name" value="B5"/>
    <property type="match status" value="1"/>
</dbReference>
<dbReference type="SMART" id="SM00896">
    <property type="entry name" value="FDX-ACB"/>
    <property type="match status" value="1"/>
</dbReference>
<dbReference type="SUPFAM" id="SSF54991">
    <property type="entry name" value="Anticodon-binding domain of PheRS"/>
    <property type="match status" value="1"/>
</dbReference>
<dbReference type="SUPFAM" id="SSF55681">
    <property type="entry name" value="Class II aaRS and biotin synthetases"/>
    <property type="match status" value="1"/>
</dbReference>
<dbReference type="SUPFAM" id="SSF50249">
    <property type="entry name" value="Nucleic acid-binding proteins"/>
    <property type="match status" value="1"/>
</dbReference>
<dbReference type="SUPFAM" id="SSF56037">
    <property type="entry name" value="PheT/TilS domain"/>
    <property type="match status" value="1"/>
</dbReference>
<dbReference type="SUPFAM" id="SSF46955">
    <property type="entry name" value="Putative DNA-binding domain"/>
    <property type="match status" value="1"/>
</dbReference>
<dbReference type="PROSITE" id="PS51483">
    <property type="entry name" value="B5"/>
    <property type="match status" value="1"/>
</dbReference>
<dbReference type="PROSITE" id="PS51447">
    <property type="entry name" value="FDX_ACB"/>
    <property type="match status" value="1"/>
</dbReference>
<dbReference type="PROSITE" id="PS50886">
    <property type="entry name" value="TRBD"/>
    <property type="match status" value="1"/>
</dbReference>
<protein>
    <recommendedName>
        <fullName evidence="1">Phenylalanine--tRNA ligase beta subunit</fullName>
        <ecNumber evidence="1">6.1.1.20</ecNumber>
    </recommendedName>
    <alternativeName>
        <fullName evidence="1">Phenylalanyl-tRNA synthetase beta subunit</fullName>
        <shortName evidence="1">PheRS</shortName>
    </alternativeName>
</protein>
<evidence type="ECO:0000255" key="1">
    <source>
        <dbReference type="HAMAP-Rule" id="MF_00283"/>
    </source>
</evidence>
<sequence length="793" mass="90755">MIITRKWLEKYLDLSNITNEQISVCLNSLGFEVEQEIDYSKLNTKLVIGHIEESDPIEGTKLKKTKTRIGENKYATILSTSRNIEEDKFAIVALPGAKLANGLELENREILGILSEGMFCGFNEIGLPNSVLTEDEQQDVYYIDSIYKNMDEMVGREISEVLNFDDYTFEVDLTLNRSDALAAKQLVKEIANYFDLKINNNEHKVKFEKPTESITIDLNKKVEDEVNTVSHTFIGLKNTNTPFDSSHDVWLKHSNVKSAQNKFENIANMATLISGQPFILIDADKVNGELTLTKQTIDEKELIVLKSGNSIVNILGLKTEDKFKVTEETVTMLVVMLNLDQISMRKQQRNLNVSTVDTQRYAKPLNPNLYDQGIDELVSILDEYKMLEDVQKVVTTVQKQNYDNVYSITLEKVQDILGIEITVEEIISLFRTLDIEISVKKSELTFTVDKNRTDLYGKNDLCEEIARLYGYDNIIEQPLEYVSFKKTKNLDKKLKDKLSDYLVGAGFNNIKTYSLTDIESNKTWNLFKVKDPVVLMSPLSIQRETFRNNLSKSMIDTIIFNANNGNKSVKFFEMADIFALNGFRQSNLCFGVSGEAITDSLSQVHIKSNYAYISSILMSVLDLYKVDVTNVTFEVNDKAIDEIHPYINATVKYKNKKIGFIYKLNPAFEQANKIYPTFICEVNLNLLLEIADKVHVTSEISKFQKSTRDISFELSNDVNFDTIVKAMLKDLNYLTNYKVIDKYSDEQMDKENISSLTVKLSFNSLDHQLTEKEINDDFEKILNNLKELKVKVR</sequence>